<sequence>MIGYVLKKILGTKNDREIKKIRKWVEKINALEESLDKLSNKDIVLKAQDLYFRVNQNEHIKQAIIEGEMVEELIEAFALVREASKRTMGLRQFDVQLIGGIVLYQGKIAEMKTGEGKTLVAAAPAFFTALTDTGVHVVTVNDYLAKRDATWIGPIYRFLGLDVGVINSDNMSYIIDWQDPEKAMEAIEKDIRVWPKGMVGDAIDYSKIDVHAKTSYFTKAISVERAKAYEAHITYGTNNEFGFDYLRDNLAVSKDQIVQVKGHGYAIVDEIDSILIDEARTPLIIAGPSNLDNKVVLQANEFVQTLEIEKDFIVDEKNRTAMLTEEGIEKAEKYFNIQNLYDIRHIDLVHAINKALLAHNLYKKDVHYMVKDGEILIVDEFTGRALPGRRWSEGLHQAIEAKEGVEIQEENQTLATTAFQNYFKLYKKLAGMTGTAETEALEFKEIYSLDVVVIPTNKPNIRKDLPDAIFKTKKEKWEYIAKVIEENHAKGRPILVGTVSIEDSETLSKLLEQRGIKHNVLNAKQHEKEAWIIAQAGRKGAVTIATNMAGRGTDILLGGNPEFLAREILKQKGIDEDKATEEEWKQAYEEATKITQKEKEEVIKAGGLLVIGTERHESRRVDNQLRGRAGRQGDPGESRFILSLEDDLLRIFGGDRVKKLMEFMKIPEGEPIESSIVSKSLEGAQERVELQNFQSRKRLLEYDEVINIQRSVVYDIRRSILFQDDIKEEIKDFIKDVIHTQVFTLLTEDEPELWELEPLKTFFKEWIDLDLPEKFEAKDREELEEEIFKLVMEKYAQKEQEIGEKTMREIEKVFTLNIIDNLWREQLHTIDKLREGIYLRSYAQRDPLVEFKKEAFRLFEELMLNFKISAIQSIMNAQISKEELEQQEQNMFNLEIDTLNKSMAISEALENIAKEFQEKRPRFRTLKDRLEERKKKLEKKGESA</sequence>
<accession>B4U965</accession>
<feature type="chain" id="PRO_1000145024" description="Protein translocase subunit SecA">
    <location>
        <begin position="1"/>
        <end position="944"/>
    </location>
</feature>
<feature type="binding site" evidence="1">
    <location>
        <position position="96"/>
    </location>
    <ligand>
        <name>ATP</name>
        <dbReference type="ChEBI" id="CHEBI:30616"/>
    </ligand>
</feature>
<feature type="binding site" evidence="1">
    <location>
        <begin position="114"/>
        <end position="118"/>
    </location>
    <ligand>
        <name>ATP</name>
        <dbReference type="ChEBI" id="CHEBI:30616"/>
    </ligand>
</feature>
<feature type="binding site" evidence="1">
    <location>
        <position position="554"/>
    </location>
    <ligand>
        <name>ATP</name>
        <dbReference type="ChEBI" id="CHEBI:30616"/>
    </ligand>
</feature>
<organism>
    <name type="scientific">Hydrogenobaculum sp. (strain Y04AAS1)</name>
    <dbReference type="NCBI Taxonomy" id="380749"/>
    <lineage>
        <taxon>Bacteria</taxon>
        <taxon>Pseudomonadati</taxon>
        <taxon>Aquificota</taxon>
        <taxon>Aquificia</taxon>
        <taxon>Aquificales</taxon>
        <taxon>Aquificaceae</taxon>
        <taxon>Hydrogenobaculum</taxon>
    </lineage>
</organism>
<evidence type="ECO:0000255" key="1">
    <source>
        <dbReference type="HAMAP-Rule" id="MF_01382"/>
    </source>
</evidence>
<name>SECA_HYDS0</name>
<reference key="1">
    <citation type="journal article" date="2009" name="J. Bacteriol.">
        <title>Complete and draft genome sequences of six members of the Aquificales.</title>
        <authorList>
            <person name="Reysenbach A.-L."/>
            <person name="Hamamura N."/>
            <person name="Podar M."/>
            <person name="Griffiths E."/>
            <person name="Ferreira S."/>
            <person name="Hochstein R."/>
            <person name="Heidelberg J."/>
            <person name="Johnson J."/>
            <person name="Mead D."/>
            <person name="Pohorille A."/>
            <person name="Sarmiento M."/>
            <person name="Schweighofer K."/>
            <person name="Seshadri R."/>
            <person name="Voytek M.A."/>
        </authorList>
    </citation>
    <scope>NUCLEOTIDE SEQUENCE [LARGE SCALE GENOMIC DNA]</scope>
    <source>
        <strain>Y04AAS1</strain>
    </source>
</reference>
<protein>
    <recommendedName>
        <fullName evidence="1">Protein translocase subunit SecA</fullName>
        <ecNumber evidence="1">7.4.2.8</ecNumber>
    </recommendedName>
</protein>
<gene>
    <name evidence="1" type="primary">secA</name>
    <name type="ordered locus">HY04AAS1_0990</name>
</gene>
<keyword id="KW-0067">ATP-binding</keyword>
<keyword id="KW-0997">Cell inner membrane</keyword>
<keyword id="KW-1003">Cell membrane</keyword>
<keyword id="KW-0963">Cytoplasm</keyword>
<keyword id="KW-0472">Membrane</keyword>
<keyword id="KW-0547">Nucleotide-binding</keyword>
<keyword id="KW-0653">Protein transport</keyword>
<keyword id="KW-1278">Translocase</keyword>
<keyword id="KW-0811">Translocation</keyword>
<keyword id="KW-0813">Transport</keyword>
<proteinExistence type="inferred from homology"/>
<comment type="function">
    <text evidence="1">Part of the Sec protein translocase complex. Interacts with the SecYEG preprotein conducting channel. Has a central role in coupling the hydrolysis of ATP to the transfer of proteins into and across the cell membrane, serving as an ATP-driven molecular motor driving the stepwise translocation of polypeptide chains across the membrane.</text>
</comment>
<comment type="catalytic activity">
    <reaction evidence="1">
        <text>ATP + H2O + cellular proteinSide 1 = ADP + phosphate + cellular proteinSide 2.</text>
        <dbReference type="EC" id="7.4.2.8"/>
    </reaction>
</comment>
<comment type="subunit">
    <text evidence="1">Monomer and homodimer. Part of the essential Sec protein translocation apparatus which comprises SecA, SecYEG and auxiliary proteins SecDF. Other proteins may also be involved.</text>
</comment>
<comment type="subcellular location">
    <subcellularLocation>
        <location evidence="1">Cell inner membrane</location>
        <topology evidence="1">Peripheral membrane protein</topology>
        <orientation evidence="1">Cytoplasmic side</orientation>
    </subcellularLocation>
    <subcellularLocation>
        <location evidence="1">Cytoplasm</location>
    </subcellularLocation>
    <text evidence="1">Distribution is 50-50.</text>
</comment>
<comment type="similarity">
    <text evidence="1">Belongs to the SecA family.</text>
</comment>
<dbReference type="EC" id="7.4.2.8" evidence="1"/>
<dbReference type="EMBL" id="CP001130">
    <property type="protein sequence ID" value="ACG57676.1"/>
    <property type="molecule type" value="Genomic_DNA"/>
</dbReference>
<dbReference type="RefSeq" id="WP_012514032.1">
    <property type="nucleotide sequence ID" value="NC_011126.1"/>
</dbReference>
<dbReference type="SMR" id="B4U965"/>
<dbReference type="STRING" id="380749.HY04AAS1_0990"/>
<dbReference type="KEGG" id="hya:HY04AAS1_0990"/>
<dbReference type="eggNOG" id="COG0653">
    <property type="taxonomic scope" value="Bacteria"/>
</dbReference>
<dbReference type="HOGENOM" id="CLU_005314_3_0_0"/>
<dbReference type="OrthoDB" id="9805579at2"/>
<dbReference type="GO" id="GO:0031522">
    <property type="term" value="C:cell envelope Sec protein transport complex"/>
    <property type="evidence" value="ECO:0007669"/>
    <property type="project" value="TreeGrafter"/>
</dbReference>
<dbReference type="GO" id="GO:0005829">
    <property type="term" value="C:cytosol"/>
    <property type="evidence" value="ECO:0007669"/>
    <property type="project" value="TreeGrafter"/>
</dbReference>
<dbReference type="GO" id="GO:0005886">
    <property type="term" value="C:plasma membrane"/>
    <property type="evidence" value="ECO:0007669"/>
    <property type="project" value="UniProtKB-SubCell"/>
</dbReference>
<dbReference type="GO" id="GO:0005524">
    <property type="term" value="F:ATP binding"/>
    <property type="evidence" value="ECO:0007669"/>
    <property type="project" value="UniProtKB-UniRule"/>
</dbReference>
<dbReference type="GO" id="GO:0008564">
    <property type="term" value="F:protein-exporting ATPase activity"/>
    <property type="evidence" value="ECO:0007669"/>
    <property type="project" value="UniProtKB-EC"/>
</dbReference>
<dbReference type="GO" id="GO:0065002">
    <property type="term" value="P:intracellular protein transmembrane transport"/>
    <property type="evidence" value="ECO:0007669"/>
    <property type="project" value="UniProtKB-UniRule"/>
</dbReference>
<dbReference type="GO" id="GO:0017038">
    <property type="term" value="P:protein import"/>
    <property type="evidence" value="ECO:0007669"/>
    <property type="project" value="InterPro"/>
</dbReference>
<dbReference type="GO" id="GO:0006605">
    <property type="term" value="P:protein targeting"/>
    <property type="evidence" value="ECO:0007669"/>
    <property type="project" value="UniProtKB-UniRule"/>
</dbReference>
<dbReference type="GO" id="GO:0043952">
    <property type="term" value="P:protein transport by the Sec complex"/>
    <property type="evidence" value="ECO:0007669"/>
    <property type="project" value="TreeGrafter"/>
</dbReference>
<dbReference type="CDD" id="cd17928">
    <property type="entry name" value="DEXDc_SecA"/>
    <property type="match status" value="1"/>
</dbReference>
<dbReference type="CDD" id="cd18803">
    <property type="entry name" value="SF2_C_secA"/>
    <property type="match status" value="1"/>
</dbReference>
<dbReference type="FunFam" id="3.40.50.300:FF:000113">
    <property type="entry name" value="Preprotein translocase subunit SecA"/>
    <property type="match status" value="1"/>
</dbReference>
<dbReference type="FunFam" id="3.90.1440.10:FF:000001">
    <property type="entry name" value="Preprotein translocase subunit SecA"/>
    <property type="match status" value="1"/>
</dbReference>
<dbReference type="Gene3D" id="1.10.3060.10">
    <property type="entry name" value="Helical scaffold and wing domains of SecA"/>
    <property type="match status" value="1"/>
</dbReference>
<dbReference type="Gene3D" id="3.40.50.300">
    <property type="entry name" value="P-loop containing nucleotide triphosphate hydrolases"/>
    <property type="match status" value="3"/>
</dbReference>
<dbReference type="Gene3D" id="3.90.1440.10">
    <property type="entry name" value="SecA, preprotein cross-linking domain"/>
    <property type="match status" value="1"/>
</dbReference>
<dbReference type="HAMAP" id="MF_01382">
    <property type="entry name" value="SecA"/>
    <property type="match status" value="1"/>
</dbReference>
<dbReference type="InterPro" id="IPR014001">
    <property type="entry name" value="Helicase_ATP-bd"/>
</dbReference>
<dbReference type="InterPro" id="IPR001650">
    <property type="entry name" value="Helicase_C-like"/>
</dbReference>
<dbReference type="InterPro" id="IPR027417">
    <property type="entry name" value="P-loop_NTPase"/>
</dbReference>
<dbReference type="InterPro" id="IPR000185">
    <property type="entry name" value="SecA"/>
</dbReference>
<dbReference type="InterPro" id="IPR020937">
    <property type="entry name" value="SecA_CS"/>
</dbReference>
<dbReference type="InterPro" id="IPR011115">
    <property type="entry name" value="SecA_DEAD"/>
</dbReference>
<dbReference type="InterPro" id="IPR014018">
    <property type="entry name" value="SecA_motor_DEAD"/>
</dbReference>
<dbReference type="InterPro" id="IPR011130">
    <property type="entry name" value="SecA_preprotein_X-link_dom"/>
</dbReference>
<dbReference type="InterPro" id="IPR044722">
    <property type="entry name" value="SecA_SF2_C"/>
</dbReference>
<dbReference type="InterPro" id="IPR011116">
    <property type="entry name" value="SecA_Wing/Scaffold"/>
</dbReference>
<dbReference type="InterPro" id="IPR036266">
    <property type="entry name" value="SecA_Wing/Scaffold_sf"/>
</dbReference>
<dbReference type="InterPro" id="IPR036670">
    <property type="entry name" value="SecA_X-link_sf"/>
</dbReference>
<dbReference type="NCBIfam" id="NF009538">
    <property type="entry name" value="PRK12904.1"/>
    <property type="match status" value="1"/>
</dbReference>
<dbReference type="NCBIfam" id="TIGR00963">
    <property type="entry name" value="secA"/>
    <property type="match status" value="1"/>
</dbReference>
<dbReference type="PANTHER" id="PTHR30612:SF0">
    <property type="entry name" value="CHLOROPLAST PROTEIN-TRANSPORTING ATPASE"/>
    <property type="match status" value="1"/>
</dbReference>
<dbReference type="PANTHER" id="PTHR30612">
    <property type="entry name" value="SECA INNER MEMBRANE COMPONENT OF SEC PROTEIN SECRETION SYSTEM"/>
    <property type="match status" value="1"/>
</dbReference>
<dbReference type="Pfam" id="PF21090">
    <property type="entry name" value="P-loop_SecA"/>
    <property type="match status" value="1"/>
</dbReference>
<dbReference type="Pfam" id="PF07517">
    <property type="entry name" value="SecA_DEAD"/>
    <property type="match status" value="1"/>
</dbReference>
<dbReference type="Pfam" id="PF01043">
    <property type="entry name" value="SecA_PP_bind"/>
    <property type="match status" value="1"/>
</dbReference>
<dbReference type="Pfam" id="PF07516">
    <property type="entry name" value="SecA_SW"/>
    <property type="match status" value="1"/>
</dbReference>
<dbReference type="PRINTS" id="PR00906">
    <property type="entry name" value="SECA"/>
</dbReference>
<dbReference type="SMART" id="SM00957">
    <property type="entry name" value="SecA_DEAD"/>
    <property type="match status" value="1"/>
</dbReference>
<dbReference type="SMART" id="SM00958">
    <property type="entry name" value="SecA_PP_bind"/>
    <property type="match status" value="1"/>
</dbReference>
<dbReference type="SUPFAM" id="SSF81886">
    <property type="entry name" value="Helical scaffold and wing domains of SecA"/>
    <property type="match status" value="1"/>
</dbReference>
<dbReference type="SUPFAM" id="SSF52540">
    <property type="entry name" value="P-loop containing nucleoside triphosphate hydrolases"/>
    <property type="match status" value="2"/>
</dbReference>
<dbReference type="SUPFAM" id="SSF81767">
    <property type="entry name" value="Pre-protein crosslinking domain of SecA"/>
    <property type="match status" value="1"/>
</dbReference>
<dbReference type="PROSITE" id="PS01312">
    <property type="entry name" value="SECA"/>
    <property type="match status" value="1"/>
</dbReference>
<dbReference type="PROSITE" id="PS51196">
    <property type="entry name" value="SECA_MOTOR_DEAD"/>
    <property type="match status" value="1"/>
</dbReference>